<dbReference type="EC" id="4.99.1.9" evidence="1"/>
<dbReference type="EMBL" id="CT573213">
    <property type="protein sequence ID" value="CAJ63158.1"/>
    <property type="molecule type" value="Genomic_DNA"/>
</dbReference>
<dbReference type="RefSeq" id="WP_011605635.1">
    <property type="nucleotide sequence ID" value="NC_008278.1"/>
</dbReference>
<dbReference type="SMR" id="Q0RH75"/>
<dbReference type="STRING" id="326424.FRAAL4516"/>
<dbReference type="KEGG" id="fal:FRAAL4516"/>
<dbReference type="eggNOG" id="COG0276">
    <property type="taxonomic scope" value="Bacteria"/>
</dbReference>
<dbReference type="HOGENOM" id="CLU_018884_2_0_11"/>
<dbReference type="OrthoDB" id="9776380at2"/>
<dbReference type="UniPathway" id="UPA00252"/>
<dbReference type="Proteomes" id="UP000000657">
    <property type="component" value="Chromosome"/>
</dbReference>
<dbReference type="GO" id="GO:0005737">
    <property type="term" value="C:cytoplasm"/>
    <property type="evidence" value="ECO:0007669"/>
    <property type="project" value="UniProtKB-SubCell"/>
</dbReference>
<dbReference type="GO" id="GO:0004325">
    <property type="term" value="F:ferrochelatase activity"/>
    <property type="evidence" value="ECO:0007669"/>
    <property type="project" value="UniProtKB-UniRule"/>
</dbReference>
<dbReference type="GO" id="GO:0046872">
    <property type="term" value="F:metal ion binding"/>
    <property type="evidence" value="ECO:0007669"/>
    <property type="project" value="UniProtKB-KW"/>
</dbReference>
<dbReference type="GO" id="GO:0006783">
    <property type="term" value="P:heme biosynthetic process"/>
    <property type="evidence" value="ECO:0007669"/>
    <property type="project" value="UniProtKB-UniRule"/>
</dbReference>
<dbReference type="CDD" id="cd00419">
    <property type="entry name" value="Ferrochelatase_C"/>
    <property type="match status" value="1"/>
</dbReference>
<dbReference type="CDD" id="cd03411">
    <property type="entry name" value="Ferrochelatase_N"/>
    <property type="match status" value="1"/>
</dbReference>
<dbReference type="Gene3D" id="3.40.50.1400">
    <property type="match status" value="2"/>
</dbReference>
<dbReference type="HAMAP" id="MF_00323">
    <property type="entry name" value="Ferrochelatase"/>
    <property type="match status" value="1"/>
</dbReference>
<dbReference type="InterPro" id="IPR001015">
    <property type="entry name" value="Ferrochelatase"/>
</dbReference>
<dbReference type="InterPro" id="IPR019772">
    <property type="entry name" value="Ferrochelatase_AS"/>
</dbReference>
<dbReference type="InterPro" id="IPR033644">
    <property type="entry name" value="Ferrochelatase_C"/>
</dbReference>
<dbReference type="InterPro" id="IPR033659">
    <property type="entry name" value="Ferrochelatase_N"/>
</dbReference>
<dbReference type="NCBIfam" id="TIGR00109">
    <property type="entry name" value="hemH"/>
    <property type="match status" value="1"/>
</dbReference>
<dbReference type="NCBIfam" id="NF000689">
    <property type="entry name" value="PRK00035.2-1"/>
    <property type="match status" value="1"/>
</dbReference>
<dbReference type="PANTHER" id="PTHR11108">
    <property type="entry name" value="FERROCHELATASE"/>
    <property type="match status" value="1"/>
</dbReference>
<dbReference type="PANTHER" id="PTHR11108:SF1">
    <property type="entry name" value="FERROCHELATASE, MITOCHONDRIAL"/>
    <property type="match status" value="1"/>
</dbReference>
<dbReference type="Pfam" id="PF00762">
    <property type="entry name" value="Ferrochelatase"/>
    <property type="match status" value="1"/>
</dbReference>
<dbReference type="SUPFAM" id="SSF53800">
    <property type="entry name" value="Chelatase"/>
    <property type="match status" value="1"/>
</dbReference>
<dbReference type="PROSITE" id="PS00534">
    <property type="entry name" value="FERROCHELATASE"/>
    <property type="match status" value="1"/>
</dbReference>
<sequence length="388" mass="41373">MTASQPAGAVDALLLVSFGGPEGPDDVLPFLRNVTAGRDVPRSRLEVVAEQYRMFGGRSPLNDQNRALAEALRAELPGLPVYWGNRNWAPYLTDTVAEMAAAGVRRAACFVTSAFSSYSGCRQYRENLAAALAALPPALAVPELVKLRLFFDHPGFVEPMVDRCVAALAELPEKARTDAHLLFTAHSLPLSQARASGPRGDAYPRQLRAVAEVIAAGVERVTGVRHPVELAYCSRSGPPAVPWLEPDVGDRLVELAGAGAVGAVVVPLGFVSDHMEVAYDLDVLAAQRAAQVGLPVARAGTVGTDPRFVAMVRELVEEVRNPDLPRRALTEFGPWPQSCAAHCCVPPRQSPQHASRAVTDAAATGRRGDAAILMGNDATSTGRRGERR</sequence>
<accession>Q0RH75</accession>
<feature type="chain" id="PRO_1000019298" description="Coproporphyrin III ferrochelatase">
    <location>
        <begin position="1"/>
        <end position="388"/>
    </location>
</feature>
<feature type="region of interest" description="Disordered" evidence="2">
    <location>
        <begin position="349"/>
        <end position="369"/>
    </location>
</feature>
<feature type="binding site" evidence="1">
    <location>
        <position position="59"/>
    </location>
    <ligand>
        <name>Fe-coproporphyrin III</name>
        <dbReference type="ChEBI" id="CHEBI:68438"/>
    </ligand>
</feature>
<feature type="binding site" evidence="1">
    <location>
        <position position="124"/>
    </location>
    <ligand>
        <name>Fe-coproporphyrin III</name>
        <dbReference type="ChEBI" id="CHEBI:68438"/>
    </ligand>
</feature>
<feature type="binding site" evidence="1">
    <location>
        <position position="186"/>
    </location>
    <ligand>
        <name>Fe(2+)</name>
        <dbReference type="ChEBI" id="CHEBI:29033"/>
    </ligand>
</feature>
<feature type="binding site" evidence="1">
    <location>
        <position position="276"/>
    </location>
    <ligand>
        <name>Fe(2+)</name>
        <dbReference type="ChEBI" id="CHEBI:29033"/>
    </ligand>
</feature>
<proteinExistence type="inferred from homology"/>
<reference key="1">
    <citation type="journal article" date="2007" name="Genome Res.">
        <title>Genome characteristics of facultatively symbiotic Frankia sp. strains reflect host range and host plant biogeography.</title>
        <authorList>
            <person name="Normand P."/>
            <person name="Lapierre P."/>
            <person name="Tisa L.S."/>
            <person name="Gogarten J.P."/>
            <person name="Alloisio N."/>
            <person name="Bagnarol E."/>
            <person name="Bassi C.A."/>
            <person name="Berry A.M."/>
            <person name="Bickhart D.M."/>
            <person name="Choisne N."/>
            <person name="Couloux A."/>
            <person name="Cournoyer B."/>
            <person name="Cruveiller S."/>
            <person name="Daubin V."/>
            <person name="Demange N."/>
            <person name="Francino M.P."/>
            <person name="Goltsman E."/>
            <person name="Huang Y."/>
            <person name="Kopp O.R."/>
            <person name="Labarre L."/>
            <person name="Lapidus A."/>
            <person name="Lavire C."/>
            <person name="Marechal J."/>
            <person name="Martinez M."/>
            <person name="Mastronunzio J.E."/>
            <person name="Mullin B.C."/>
            <person name="Niemann J."/>
            <person name="Pujic P."/>
            <person name="Rawnsley T."/>
            <person name="Rouy Z."/>
            <person name="Schenowitz C."/>
            <person name="Sellstedt A."/>
            <person name="Tavares F."/>
            <person name="Tomkins J.P."/>
            <person name="Vallenet D."/>
            <person name="Valverde C."/>
            <person name="Wall L.G."/>
            <person name="Wang Y."/>
            <person name="Medigue C."/>
            <person name="Benson D.R."/>
        </authorList>
    </citation>
    <scope>NUCLEOTIDE SEQUENCE [LARGE SCALE GENOMIC DNA]</scope>
    <source>
        <strain>DSM 45986 / CECT 9034 / ACN14a</strain>
    </source>
</reference>
<comment type="function">
    <text evidence="1">Involved in coproporphyrin-dependent heme b biosynthesis. Catalyzes the insertion of ferrous iron into coproporphyrin III to form Fe-coproporphyrin III.</text>
</comment>
<comment type="catalytic activity">
    <reaction evidence="1">
        <text>Fe-coproporphyrin III + 2 H(+) = coproporphyrin III + Fe(2+)</text>
        <dbReference type="Rhea" id="RHEA:49572"/>
        <dbReference type="ChEBI" id="CHEBI:15378"/>
        <dbReference type="ChEBI" id="CHEBI:29033"/>
        <dbReference type="ChEBI" id="CHEBI:68438"/>
        <dbReference type="ChEBI" id="CHEBI:131725"/>
        <dbReference type="EC" id="4.99.1.9"/>
    </reaction>
    <physiologicalReaction direction="right-to-left" evidence="1">
        <dbReference type="Rhea" id="RHEA:49574"/>
    </physiologicalReaction>
</comment>
<comment type="pathway">
    <text evidence="1">Porphyrin-containing compound metabolism; protoheme biosynthesis.</text>
</comment>
<comment type="subcellular location">
    <subcellularLocation>
        <location evidence="1">Cytoplasm</location>
    </subcellularLocation>
</comment>
<comment type="similarity">
    <text evidence="1">Belongs to the ferrochelatase family.</text>
</comment>
<name>CPFC_FRAAA</name>
<protein>
    <recommendedName>
        <fullName evidence="1">Coproporphyrin III ferrochelatase</fullName>
        <ecNumber evidence="1">4.99.1.9</ecNumber>
    </recommendedName>
</protein>
<evidence type="ECO:0000255" key="1">
    <source>
        <dbReference type="HAMAP-Rule" id="MF_00323"/>
    </source>
</evidence>
<evidence type="ECO:0000256" key="2">
    <source>
        <dbReference type="SAM" id="MobiDB-lite"/>
    </source>
</evidence>
<keyword id="KW-0963">Cytoplasm</keyword>
<keyword id="KW-0350">Heme biosynthesis</keyword>
<keyword id="KW-0408">Iron</keyword>
<keyword id="KW-0456">Lyase</keyword>
<keyword id="KW-0479">Metal-binding</keyword>
<keyword id="KW-0627">Porphyrin biosynthesis</keyword>
<keyword id="KW-1185">Reference proteome</keyword>
<organism>
    <name type="scientific">Frankia alni (strain DSM 45986 / CECT 9034 / ACN14a)</name>
    <dbReference type="NCBI Taxonomy" id="326424"/>
    <lineage>
        <taxon>Bacteria</taxon>
        <taxon>Bacillati</taxon>
        <taxon>Actinomycetota</taxon>
        <taxon>Actinomycetes</taxon>
        <taxon>Frankiales</taxon>
        <taxon>Frankiaceae</taxon>
        <taxon>Frankia</taxon>
    </lineage>
</organism>
<gene>
    <name evidence="1" type="primary">cpfC</name>
    <name type="ordered locus">FRAAL4516</name>
</gene>